<feature type="chain" id="PRO_0000138735" description="Geranylgeranylglyceryl phosphate synthase">
    <location>
        <begin position="1"/>
        <end position="256"/>
    </location>
</feature>
<feature type="binding site" evidence="1">
    <location>
        <position position="28"/>
    </location>
    <ligand>
        <name>Mg(2+)</name>
        <dbReference type="ChEBI" id="CHEBI:18420"/>
    </ligand>
</feature>
<feature type="binding site" evidence="1">
    <location>
        <position position="53"/>
    </location>
    <ligand>
        <name>Mg(2+)</name>
        <dbReference type="ChEBI" id="CHEBI:18420"/>
    </ligand>
</feature>
<feature type="binding site" evidence="1">
    <location>
        <begin position="172"/>
        <end position="178"/>
    </location>
    <ligand>
        <name>sn-glycerol 1-phosphate</name>
        <dbReference type="ChEBI" id="CHEBI:57685"/>
    </ligand>
</feature>
<feature type="binding site" evidence="1">
    <location>
        <begin position="203"/>
        <end position="204"/>
    </location>
    <ligand>
        <name>sn-glycerol 1-phosphate</name>
        <dbReference type="ChEBI" id="CHEBI:57685"/>
    </ligand>
</feature>
<feature type="binding site" evidence="1">
    <location>
        <begin position="225"/>
        <end position="226"/>
    </location>
    <ligand>
        <name>sn-glycerol 1-phosphate</name>
        <dbReference type="ChEBI" id="CHEBI:57685"/>
    </ligand>
</feature>
<evidence type="ECO:0000255" key="1">
    <source>
        <dbReference type="HAMAP-Rule" id="MF_00112"/>
    </source>
</evidence>
<accession>Q6M1A9</accession>
<organism>
    <name type="scientific">Methanococcus maripaludis (strain DSM 14266 / JCM 13030 / NBRC 101832 / S2 / LL)</name>
    <dbReference type="NCBI Taxonomy" id="267377"/>
    <lineage>
        <taxon>Archaea</taxon>
        <taxon>Methanobacteriati</taxon>
        <taxon>Methanobacteriota</taxon>
        <taxon>Methanomada group</taxon>
        <taxon>Methanococci</taxon>
        <taxon>Methanococcales</taxon>
        <taxon>Methanococcaceae</taxon>
        <taxon>Methanococcus</taxon>
    </lineage>
</organism>
<dbReference type="EC" id="2.5.1.41" evidence="1"/>
<dbReference type="EMBL" id="BX950229">
    <property type="protein sequence ID" value="CAF29563.1"/>
    <property type="molecule type" value="Genomic_DNA"/>
</dbReference>
<dbReference type="RefSeq" id="WP_011169951.1">
    <property type="nucleotide sequence ID" value="NC_005791.1"/>
</dbReference>
<dbReference type="SMR" id="Q6M1A9"/>
<dbReference type="STRING" id="267377.MMP0007"/>
<dbReference type="EnsemblBacteria" id="CAF29563">
    <property type="protein sequence ID" value="CAF29563"/>
    <property type="gene ID" value="MMP0007"/>
</dbReference>
<dbReference type="KEGG" id="mmp:MMP0007"/>
<dbReference type="PATRIC" id="fig|267377.15.peg.7"/>
<dbReference type="eggNOG" id="arCOG01085">
    <property type="taxonomic scope" value="Archaea"/>
</dbReference>
<dbReference type="HOGENOM" id="CLU_068610_0_0_2"/>
<dbReference type="OrthoDB" id="7409at2157"/>
<dbReference type="UniPathway" id="UPA00940"/>
<dbReference type="Proteomes" id="UP000000590">
    <property type="component" value="Chromosome"/>
</dbReference>
<dbReference type="GO" id="GO:0005737">
    <property type="term" value="C:cytoplasm"/>
    <property type="evidence" value="ECO:0007669"/>
    <property type="project" value="UniProtKB-SubCell"/>
</dbReference>
<dbReference type="GO" id="GO:0000107">
    <property type="term" value="F:imidazoleglycerol-phosphate synthase activity"/>
    <property type="evidence" value="ECO:0007669"/>
    <property type="project" value="TreeGrafter"/>
</dbReference>
<dbReference type="GO" id="GO:0000287">
    <property type="term" value="F:magnesium ion binding"/>
    <property type="evidence" value="ECO:0007669"/>
    <property type="project" value="UniProtKB-UniRule"/>
</dbReference>
<dbReference type="GO" id="GO:0047294">
    <property type="term" value="F:phosphoglycerol geranylgeranyltransferase activity"/>
    <property type="evidence" value="ECO:0007669"/>
    <property type="project" value="UniProtKB-UniRule"/>
</dbReference>
<dbReference type="GO" id="GO:0046474">
    <property type="term" value="P:glycerophospholipid biosynthetic process"/>
    <property type="evidence" value="ECO:0007669"/>
    <property type="project" value="UniProtKB-UniRule"/>
</dbReference>
<dbReference type="Gene3D" id="3.20.20.390">
    <property type="entry name" value="FMN-linked oxidoreductases"/>
    <property type="match status" value="1"/>
</dbReference>
<dbReference type="HAMAP" id="MF_00112">
    <property type="entry name" value="GGGP_HepGP_synthase"/>
    <property type="match status" value="1"/>
</dbReference>
<dbReference type="InterPro" id="IPR038597">
    <property type="entry name" value="GGGP/HepGP_synthase_sf"/>
</dbReference>
<dbReference type="InterPro" id="IPR008205">
    <property type="entry name" value="GGGP_HepGP_synthase"/>
</dbReference>
<dbReference type="InterPro" id="IPR010946">
    <property type="entry name" value="GGGP_synth"/>
</dbReference>
<dbReference type="InterPro" id="IPR050064">
    <property type="entry name" value="IGPS_HisA/HisF"/>
</dbReference>
<dbReference type="NCBIfam" id="TIGR01769">
    <property type="entry name" value="GGGP"/>
    <property type="match status" value="1"/>
</dbReference>
<dbReference type="NCBIfam" id="TIGR01768">
    <property type="entry name" value="GGGP-family"/>
    <property type="match status" value="1"/>
</dbReference>
<dbReference type="NCBIfam" id="NF003198">
    <property type="entry name" value="PRK04169.1-2"/>
    <property type="match status" value="1"/>
</dbReference>
<dbReference type="NCBIfam" id="NF003201">
    <property type="entry name" value="PRK04169.1-5"/>
    <property type="match status" value="1"/>
</dbReference>
<dbReference type="PANTHER" id="PTHR21235:SF22">
    <property type="entry name" value="GERANYLGERANYLGLYCERYL PHOSPHATE SYNTHASE"/>
    <property type="match status" value="1"/>
</dbReference>
<dbReference type="PANTHER" id="PTHR21235">
    <property type="entry name" value="IMIDAZOLE GLYCEROL PHOSPHATE SYNTHASE SUBUNIT HISF/H IGP SYNTHASE SUBUNIT HISF/H"/>
    <property type="match status" value="1"/>
</dbReference>
<dbReference type="Pfam" id="PF01884">
    <property type="entry name" value="PcrB"/>
    <property type="match status" value="1"/>
</dbReference>
<dbReference type="SUPFAM" id="SSF51395">
    <property type="entry name" value="FMN-linked oxidoreductases"/>
    <property type="match status" value="1"/>
</dbReference>
<comment type="function">
    <text evidence="1">Prenyltransferase that catalyzes the transfer of the geranylgeranyl moiety of geranylgeranyl diphosphate (GGPP) to the C3 hydroxyl of sn-glycerol-1-phosphate (G1P). This reaction is the first ether-bond-formation step in the biosynthesis of archaeal membrane lipids.</text>
</comment>
<comment type="catalytic activity">
    <reaction evidence="1">
        <text>sn-glycerol 1-phosphate + (2E,6E,10E)-geranylgeranyl diphosphate = sn-3-O-(geranylgeranyl)glycerol 1-phosphate + diphosphate</text>
        <dbReference type="Rhea" id="RHEA:23404"/>
        <dbReference type="ChEBI" id="CHEBI:33019"/>
        <dbReference type="ChEBI" id="CHEBI:57677"/>
        <dbReference type="ChEBI" id="CHEBI:57685"/>
        <dbReference type="ChEBI" id="CHEBI:58756"/>
        <dbReference type="EC" id="2.5.1.41"/>
    </reaction>
</comment>
<comment type="cofactor">
    <cofactor evidence="1">
        <name>Mg(2+)</name>
        <dbReference type="ChEBI" id="CHEBI:18420"/>
    </cofactor>
</comment>
<comment type="pathway">
    <text evidence="1">Membrane lipid metabolism; glycerophospholipid metabolism.</text>
</comment>
<comment type="subcellular location">
    <subcellularLocation>
        <location evidence="1">Cytoplasm</location>
    </subcellularLocation>
</comment>
<comment type="similarity">
    <text evidence="1">Belongs to the GGGP/HepGP synthase family. Group II subfamily.</text>
</comment>
<reference key="1">
    <citation type="journal article" date="2004" name="J. Bacteriol.">
        <title>Complete genome sequence of the genetically tractable hydrogenotrophic methanogen Methanococcus maripaludis.</title>
        <authorList>
            <person name="Hendrickson E.L."/>
            <person name="Kaul R."/>
            <person name="Zhou Y."/>
            <person name="Bovee D."/>
            <person name="Chapman P."/>
            <person name="Chung J."/>
            <person name="Conway de Macario E."/>
            <person name="Dodsworth J.A."/>
            <person name="Gillett W."/>
            <person name="Graham D.E."/>
            <person name="Hackett M."/>
            <person name="Haydock A.K."/>
            <person name="Kang A."/>
            <person name="Land M.L."/>
            <person name="Levy R."/>
            <person name="Lie T.J."/>
            <person name="Major T.A."/>
            <person name="Moore B.C."/>
            <person name="Porat I."/>
            <person name="Palmeiri A."/>
            <person name="Rouse G."/>
            <person name="Saenphimmachak C."/>
            <person name="Soell D."/>
            <person name="Van Dien S."/>
            <person name="Wang T."/>
            <person name="Whitman W.B."/>
            <person name="Xia Q."/>
            <person name="Zhang Y."/>
            <person name="Larimer F.W."/>
            <person name="Olson M.V."/>
            <person name="Leigh J.A."/>
        </authorList>
    </citation>
    <scope>NUCLEOTIDE SEQUENCE [LARGE SCALE GENOMIC DNA]</scope>
    <source>
        <strain>DSM 14266 / JCM 13030 / NBRC 101832 / S2 / LL</strain>
    </source>
</reference>
<proteinExistence type="inferred from homology"/>
<name>GGGPS_METMP</name>
<protein>
    <recommendedName>
        <fullName evidence="1">Geranylgeranylglyceryl phosphate synthase</fullName>
        <shortName evidence="1">GGGP synthase</shortName>
        <shortName evidence="1">GGGPS</shortName>
        <ecNumber evidence="1">2.5.1.41</ecNumber>
    </recommendedName>
    <alternativeName>
        <fullName evidence="1">(S)-3-O-geranylgeranylglyceryl phosphate synthase</fullName>
    </alternativeName>
    <alternativeName>
        <fullName evidence="1">Phosphoglycerol geranylgeranyltransferase</fullName>
    </alternativeName>
</protein>
<sequence>MQIKIGEIESKLNKIIEEEGAAYFVLIDPDEKNYREIANHVKDYADAIIIGGSIGIINLDEVTKDIKEITGLPIILFPGNVDGVTKEADAVFFMSLMNSKNTYWNMTAPTLGALTIKKYGLETLPMAYLGIEPISKTAVGFVGEVNEIPQKKPEIAGLYSLSASYFGMRWAYLEAGSGAEYPVSNEMVGISKKLSGINIIVGGGIRTPEVAYEKVMSGADVIVTGTLTEKDPQAVVEMKKAIKKAGLDKLKMLSKK</sequence>
<gene>
    <name type="ordered locus">MMP0007</name>
</gene>
<keyword id="KW-0963">Cytoplasm</keyword>
<keyword id="KW-0444">Lipid biosynthesis</keyword>
<keyword id="KW-0443">Lipid metabolism</keyword>
<keyword id="KW-0460">Magnesium</keyword>
<keyword id="KW-0479">Metal-binding</keyword>
<keyword id="KW-0594">Phospholipid biosynthesis</keyword>
<keyword id="KW-1208">Phospholipid metabolism</keyword>
<keyword id="KW-1185">Reference proteome</keyword>
<keyword id="KW-0808">Transferase</keyword>